<sequence length="912" mass="100465">MCRIAGTPPRILPPLALMLLAALQQAPIKATCEDMLCKMGFPEDVHSAVVSRSVHGGQPLLNVRFQSCDENRKIYFGSSEPEDFRVGEDGVVYAERSFQLSAEPTEFVVSARDKETQEEWQMKVKLTPEPAFTGASEKDQKKIEDIIFPWQQYKDSSHLKRQKRDWVIPPINLPENSRGPFPQELVRIRSDRDKSLSLRYSVTGPGADQPPTGIFIINPISGQLSVTKPLDREQIASFHLRAHAVDVNGNQVENPIDIVINVIDMNDNRPEFLHQVWNGTVPEGSKPGTYVMTVTAIDADDPNAQNGMLRYRILSQAPSSPSPNMFTINNETGDIITVAAGLDREKVQQYTLIIQATDMEGNPTYGLSNTATAVITVTDVNDNPPEFTAMTFYGEVPENRVDVIVANLTVTDKDQPHTPAWNARYQMTGGDPTGQFTILTDPNSNDGLVTVVKPIDFETNRMFVLTVAAENQVPLAKGIQHPPQSTATVSITVIDVNESPYFVPNPKLVRQEEGLLAGSMLTTFTARDPDRYMQQTSLRYSKLSDPANWLKIDPVNGQITTTAVLDRESIYVQNNMYNATFLASDNGIPPMSGTGTLQIYLLDINDNAPQVNPKEATTCETLQPNAINITAVDPDIDPNAGPFAFELPDSPPSIKRNWTIVRISGDHAQLSLRIRFLEAGIYDVPIVITDSGNPHASSTSVLKVKVCQCDINGDCTDVDRIVGAGLGTGAIIAILLCIIILLILVLMFVVWMKRRDKERQAKQLLIDPEDDVRDNILKYDEEGGGEEDQDYDLSQLQQPDTVEPDAIKPVGIRRLDERPIHAEPQYPVRSAAPHPGDIGDFINEGLKAADNDPTAPPYDSLLVFDYEGSGSTAGSLSSLNSSSSGGEQDYDYLNDWGPRFKKLADMYGGGDD</sequence>
<name>CADH2_CHICK</name>
<accession>P10288</accession>
<accession>Q90630</accession>
<gene>
    <name type="primary">CDH2</name>
</gene>
<protein>
    <recommendedName>
        <fullName>Cadherin-2</fullName>
    </recommendedName>
    <alternativeName>
        <fullName>Neural cadherin</fullName>
        <shortName evidence="10">N-cadherin</shortName>
    </alternativeName>
</protein>
<dbReference type="EMBL" id="X07277">
    <property type="protein sequence ID" value="CAA30258.1"/>
    <property type="molecule type" value="mRNA"/>
</dbReference>
<dbReference type="EMBL" id="U15563">
    <property type="protein sequence ID" value="AAB62980.1"/>
    <property type="molecule type" value="Genomic_DNA"/>
</dbReference>
<dbReference type="PIR" id="A29964">
    <property type="entry name" value="IJCHCN"/>
</dbReference>
<dbReference type="RefSeq" id="NP_001001615.1">
    <property type="nucleotide sequence ID" value="NM_001001615.2"/>
</dbReference>
<dbReference type="SMR" id="P10288"/>
<dbReference type="DIP" id="DIP-29636N"/>
<dbReference type="FunCoup" id="P10288">
    <property type="interactions" value="70"/>
</dbReference>
<dbReference type="IntAct" id="P10288">
    <property type="interactions" value="9"/>
</dbReference>
<dbReference type="MINT" id="P10288"/>
<dbReference type="STRING" id="9031.ENSGALP00000024371"/>
<dbReference type="GlyCosmos" id="P10288">
    <property type="glycosylation" value="6 sites, No reported glycans"/>
</dbReference>
<dbReference type="GlyGen" id="P10288">
    <property type="glycosylation" value="6 sites"/>
</dbReference>
<dbReference type="PaxDb" id="9031-ENSGALP00000024371"/>
<dbReference type="Ensembl" id="ENSGALT00010013463.1">
    <property type="protein sequence ID" value="ENSGALP00010007990.1"/>
    <property type="gene ID" value="ENSGALG00010005621.1"/>
</dbReference>
<dbReference type="GeneID" id="414745"/>
<dbReference type="KEGG" id="gga:414745"/>
<dbReference type="CTD" id="1000"/>
<dbReference type="VEuPathDB" id="HostDB:geneid_414745"/>
<dbReference type="eggNOG" id="KOG3594">
    <property type="taxonomic scope" value="Eukaryota"/>
</dbReference>
<dbReference type="GeneTree" id="ENSGT00940000155981"/>
<dbReference type="HOGENOM" id="CLU_005284_2_0_1"/>
<dbReference type="InParanoid" id="P10288"/>
<dbReference type="OMA" id="KEQWQVI"/>
<dbReference type="OrthoDB" id="6079678at2759"/>
<dbReference type="PhylomeDB" id="P10288"/>
<dbReference type="TreeFam" id="TF316817"/>
<dbReference type="Reactome" id="R-GGA-381426">
    <property type="pathway name" value="Regulation of Insulin-like Growth Factor (IGF) transport and uptake by Insulin-like Growth Factor Binding Proteins (IGFBPs)"/>
</dbReference>
<dbReference type="Reactome" id="R-GGA-418990">
    <property type="pathway name" value="Adherens junctions interactions"/>
</dbReference>
<dbReference type="Reactome" id="R-GGA-525793">
    <property type="pathway name" value="Myogenesis"/>
</dbReference>
<dbReference type="Reactome" id="R-GGA-8957275">
    <property type="pathway name" value="Post-translational protein phosphorylation"/>
</dbReference>
<dbReference type="PRO" id="PR:P10288"/>
<dbReference type="Proteomes" id="UP000000539">
    <property type="component" value="Chromosome 2"/>
</dbReference>
<dbReference type="Bgee" id="ENSGALG00000015132">
    <property type="expression patterns" value="Expressed in heart and 13 other cell types or tissues"/>
</dbReference>
<dbReference type="GO" id="GO:0005912">
    <property type="term" value="C:adherens junction"/>
    <property type="evidence" value="ECO:0000314"/>
    <property type="project" value="AgBase"/>
</dbReference>
<dbReference type="GO" id="GO:0045177">
    <property type="term" value="C:apical part of cell"/>
    <property type="evidence" value="ECO:0000314"/>
    <property type="project" value="AgBase"/>
</dbReference>
<dbReference type="GO" id="GO:0016324">
    <property type="term" value="C:apical plasma membrane"/>
    <property type="evidence" value="ECO:0007669"/>
    <property type="project" value="Ensembl"/>
</dbReference>
<dbReference type="GO" id="GO:0016327">
    <property type="term" value="C:apicolateral plasma membrane"/>
    <property type="evidence" value="ECO:0007669"/>
    <property type="project" value="Ensembl"/>
</dbReference>
<dbReference type="GO" id="GO:0016323">
    <property type="term" value="C:basolateral plasma membrane"/>
    <property type="evidence" value="ECO:0007669"/>
    <property type="project" value="Ensembl"/>
</dbReference>
<dbReference type="GO" id="GO:0016342">
    <property type="term" value="C:catenin complex"/>
    <property type="evidence" value="ECO:0000318"/>
    <property type="project" value="GO_Central"/>
</dbReference>
<dbReference type="GO" id="GO:0044297">
    <property type="term" value="C:cell body"/>
    <property type="evidence" value="ECO:0000314"/>
    <property type="project" value="AgBase"/>
</dbReference>
<dbReference type="GO" id="GO:0009986">
    <property type="term" value="C:cell surface"/>
    <property type="evidence" value="ECO:0000314"/>
    <property type="project" value="AgBase"/>
</dbReference>
<dbReference type="GO" id="GO:0005911">
    <property type="term" value="C:cell-cell junction"/>
    <property type="evidence" value="ECO:0000314"/>
    <property type="project" value="AgBase"/>
</dbReference>
<dbReference type="GO" id="GO:0030864">
    <property type="term" value="C:cortical actin cytoskeleton"/>
    <property type="evidence" value="ECO:0007669"/>
    <property type="project" value="Ensembl"/>
</dbReference>
<dbReference type="GO" id="GO:0005737">
    <property type="term" value="C:cytoplasm"/>
    <property type="evidence" value="ECO:0000318"/>
    <property type="project" value="GO_Central"/>
</dbReference>
<dbReference type="GO" id="GO:0005829">
    <property type="term" value="C:cytosol"/>
    <property type="evidence" value="ECO:0000314"/>
    <property type="project" value="AgBase"/>
</dbReference>
<dbReference type="GO" id="GO:0030057">
    <property type="term" value="C:desmosome"/>
    <property type="evidence" value="ECO:0000250"/>
    <property type="project" value="UniProtKB"/>
</dbReference>
<dbReference type="GO" id="GO:0005916">
    <property type="term" value="C:fascia adherens"/>
    <property type="evidence" value="ECO:0007669"/>
    <property type="project" value="Ensembl"/>
</dbReference>
<dbReference type="GO" id="GO:0014704">
    <property type="term" value="C:intercalated disc"/>
    <property type="evidence" value="ECO:0000314"/>
    <property type="project" value="UniProtKB"/>
</dbReference>
<dbReference type="GO" id="GO:0030027">
    <property type="term" value="C:lamellipodium"/>
    <property type="evidence" value="ECO:0000318"/>
    <property type="project" value="GO_Central"/>
</dbReference>
<dbReference type="GO" id="GO:0043005">
    <property type="term" value="C:neuron projection"/>
    <property type="evidence" value="ECO:0000314"/>
    <property type="project" value="AgBase"/>
</dbReference>
<dbReference type="GO" id="GO:0005886">
    <property type="term" value="C:plasma membrane"/>
    <property type="evidence" value="ECO:0000314"/>
    <property type="project" value="AgBase"/>
</dbReference>
<dbReference type="GO" id="GO:0044853">
    <property type="term" value="C:plasma membrane raft"/>
    <property type="evidence" value="ECO:0007669"/>
    <property type="project" value="Ensembl"/>
</dbReference>
<dbReference type="GO" id="GO:0045211">
    <property type="term" value="C:postsynaptic membrane"/>
    <property type="evidence" value="ECO:0000314"/>
    <property type="project" value="SynGO"/>
</dbReference>
<dbReference type="GO" id="GO:0042734">
    <property type="term" value="C:presynaptic membrane"/>
    <property type="evidence" value="ECO:0000314"/>
    <property type="project" value="SynGO"/>
</dbReference>
<dbReference type="GO" id="GO:0042383">
    <property type="term" value="C:sarcolemma"/>
    <property type="evidence" value="ECO:0007669"/>
    <property type="project" value="UniProtKB-SubCell"/>
</dbReference>
<dbReference type="GO" id="GO:0045294">
    <property type="term" value="F:alpha-catenin binding"/>
    <property type="evidence" value="ECO:0007669"/>
    <property type="project" value="Ensembl"/>
</dbReference>
<dbReference type="GO" id="GO:0008013">
    <property type="term" value="F:beta-catenin binding"/>
    <property type="evidence" value="ECO:0000318"/>
    <property type="project" value="GO_Central"/>
</dbReference>
<dbReference type="GO" id="GO:0045296">
    <property type="term" value="F:cadherin binding"/>
    <property type="evidence" value="ECO:0000315"/>
    <property type="project" value="AgBase"/>
</dbReference>
<dbReference type="GO" id="GO:0005509">
    <property type="term" value="F:calcium ion binding"/>
    <property type="evidence" value="ECO:0000250"/>
    <property type="project" value="UniProtKB"/>
</dbReference>
<dbReference type="GO" id="GO:0050840">
    <property type="term" value="F:extracellular matrix binding"/>
    <property type="evidence" value="ECO:0000304"/>
    <property type="project" value="AgBase"/>
</dbReference>
<dbReference type="GO" id="GO:0045295">
    <property type="term" value="F:gamma-catenin binding"/>
    <property type="evidence" value="ECO:0000353"/>
    <property type="project" value="BHF-UCL"/>
</dbReference>
<dbReference type="GO" id="GO:0042802">
    <property type="term" value="F:identical protein binding"/>
    <property type="evidence" value="ECO:0007669"/>
    <property type="project" value="Ensembl"/>
</dbReference>
<dbReference type="GO" id="GO:0019901">
    <property type="term" value="F:protein kinase binding"/>
    <property type="evidence" value="ECO:0007669"/>
    <property type="project" value="Ensembl"/>
</dbReference>
<dbReference type="GO" id="GO:0019903">
    <property type="term" value="F:protein phosphatase binding"/>
    <property type="evidence" value="ECO:0007669"/>
    <property type="project" value="Ensembl"/>
</dbReference>
<dbReference type="GO" id="GO:0003723">
    <property type="term" value="F:RNA binding"/>
    <property type="evidence" value="ECO:0007669"/>
    <property type="project" value="Ensembl"/>
</dbReference>
<dbReference type="GO" id="GO:0034332">
    <property type="term" value="P:adherens junction organization"/>
    <property type="evidence" value="ECO:0000318"/>
    <property type="project" value="GO_Central"/>
</dbReference>
<dbReference type="GO" id="GO:0048514">
    <property type="term" value="P:blood vessel morphogenesis"/>
    <property type="evidence" value="ECO:0007669"/>
    <property type="project" value="Ensembl"/>
</dbReference>
<dbReference type="GO" id="GO:0048854">
    <property type="term" value="P:brain morphogenesis"/>
    <property type="evidence" value="ECO:0007669"/>
    <property type="project" value="Ensembl"/>
</dbReference>
<dbReference type="GO" id="GO:0016339">
    <property type="term" value="P:calcium-dependent cell-cell adhesion via plasma membrane cell adhesion molecules"/>
    <property type="evidence" value="ECO:0000318"/>
    <property type="project" value="GO_Central"/>
</dbReference>
<dbReference type="GO" id="GO:0001502">
    <property type="term" value="P:cartilage condensation"/>
    <property type="evidence" value="ECO:0000304"/>
    <property type="project" value="AgBase"/>
</dbReference>
<dbReference type="GO" id="GO:0007155">
    <property type="term" value="P:cell adhesion"/>
    <property type="evidence" value="ECO:0000304"/>
    <property type="project" value="AgBase"/>
</dbReference>
<dbReference type="GO" id="GO:0098743">
    <property type="term" value="P:cell aggregation"/>
    <property type="evidence" value="ECO:0000315"/>
    <property type="project" value="AgBase"/>
</dbReference>
<dbReference type="GO" id="GO:0016477">
    <property type="term" value="P:cell migration"/>
    <property type="evidence" value="ECO:0000318"/>
    <property type="project" value="GO_Central"/>
</dbReference>
<dbReference type="GO" id="GO:0000902">
    <property type="term" value="P:cell morphogenesis"/>
    <property type="evidence" value="ECO:0000318"/>
    <property type="project" value="GO_Central"/>
</dbReference>
<dbReference type="GO" id="GO:0098609">
    <property type="term" value="P:cell-cell adhesion"/>
    <property type="evidence" value="ECO:0000250"/>
    <property type="project" value="UniProtKB"/>
</dbReference>
<dbReference type="GO" id="GO:0044331">
    <property type="term" value="P:cell-cell adhesion mediated by cadherin"/>
    <property type="evidence" value="ECO:0000315"/>
    <property type="project" value="AgBase"/>
</dbReference>
<dbReference type="GO" id="GO:0098742">
    <property type="term" value="P:cell-cell adhesion via plasma-membrane adhesion molecules"/>
    <property type="evidence" value="ECO:0000315"/>
    <property type="project" value="AgBase"/>
</dbReference>
<dbReference type="GO" id="GO:0007043">
    <property type="term" value="P:cell-cell junction assembly"/>
    <property type="evidence" value="ECO:0000318"/>
    <property type="project" value="GO_Central"/>
</dbReference>
<dbReference type="GO" id="GO:0021987">
    <property type="term" value="P:cerebral cortex development"/>
    <property type="evidence" value="ECO:0007669"/>
    <property type="project" value="Ensembl"/>
</dbReference>
<dbReference type="GO" id="GO:0010001">
    <property type="term" value="P:glial cell differentiation"/>
    <property type="evidence" value="ECO:0000250"/>
    <property type="project" value="UniProtKB"/>
</dbReference>
<dbReference type="GO" id="GO:0007157">
    <property type="term" value="P:heterophilic cell-cell adhesion via plasma membrane cell adhesion molecules"/>
    <property type="evidence" value="ECO:0007669"/>
    <property type="project" value="Ensembl"/>
</dbReference>
<dbReference type="GO" id="GO:0048872">
    <property type="term" value="P:homeostasis of number of cells"/>
    <property type="evidence" value="ECO:0007669"/>
    <property type="project" value="Ensembl"/>
</dbReference>
<dbReference type="GO" id="GO:0007156">
    <property type="term" value="P:homophilic cell adhesion via plasma membrane adhesion molecules"/>
    <property type="evidence" value="ECO:0007669"/>
    <property type="project" value="Ensembl"/>
</dbReference>
<dbReference type="GO" id="GO:0060173">
    <property type="term" value="P:limb development"/>
    <property type="evidence" value="ECO:0000304"/>
    <property type="project" value="AgBase"/>
</dbReference>
<dbReference type="GO" id="GO:0090497">
    <property type="term" value="P:mesenchymal cell migration"/>
    <property type="evidence" value="ECO:0007669"/>
    <property type="project" value="Ensembl"/>
</dbReference>
<dbReference type="GO" id="GO:0090090">
    <property type="term" value="P:negative regulation of canonical Wnt signaling pathway"/>
    <property type="evidence" value="ECO:0007669"/>
    <property type="project" value="Ensembl"/>
</dbReference>
<dbReference type="GO" id="GO:0030336">
    <property type="term" value="P:negative regulation of cell migration"/>
    <property type="evidence" value="ECO:0000315"/>
    <property type="project" value="AgBase"/>
</dbReference>
<dbReference type="GO" id="GO:0036032">
    <property type="term" value="P:neural crest cell delamination"/>
    <property type="evidence" value="ECO:0000315"/>
    <property type="project" value="AgBase"/>
</dbReference>
<dbReference type="GO" id="GO:0014032">
    <property type="term" value="P:neural crest cell development"/>
    <property type="evidence" value="ECO:0007669"/>
    <property type="project" value="Ensembl"/>
</dbReference>
<dbReference type="GO" id="GO:0001841">
    <property type="term" value="P:neural tube formation"/>
    <property type="evidence" value="ECO:0000315"/>
    <property type="project" value="AgBase"/>
</dbReference>
<dbReference type="GO" id="GO:0060563">
    <property type="term" value="P:neuroepithelial cell differentiation"/>
    <property type="evidence" value="ECO:0007669"/>
    <property type="project" value="Ensembl"/>
</dbReference>
<dbReference type="GO" id="GO:0097118">
    <property type="term" value="P:neuroligin clustering involved in postsynaptic membrane assembly"/>
    <property type="evidence" value="ECO:0007669"/>
    <property type="project" value="Ensembl"/>
</dbReference>
<dbReference type="GO" id="GO:0140058">
    <property type="term" value="P:neuron projection arborization"/>
    <property type="evidence" value="ECO:0000315"/>
    <property type="project" value="UniProtKB"/>
</dbReference>
<dbReference type="GO" id="GO:0097150">
    <property type="term" value="P:neuronal stem cell population maintenance"/>
    <property type="evidence" value="ECO:0000250"/>
    <property type="project" value="UniProtKB"/>
</dbReference>
<dbReference type="GO" id="GO:0043410">
    <property type="term" value="P:positive regulation of MAPK cascade"/>
    <property type="evidence" value="ECO:0007669"/>
    <property type="project" value="Ensembl"/>
</dbReference>
<dbReference type="GO" id="GO:2000809">
    <property type="term" value="P:positive regulation of synaptic vesicle clustering"/>
    <property type="evidence" value="ECO:0007669"/>
    <property type="project" value="Ensembl"/>
</dbReference>
<dbReference type="GO" id="GO:0072659">
    <property type="term" value="P:protein localization to plasma membrane"/>
    <property type="evidence" value="ECO:0007669"/>
    <property type="project" value="Ensembl"/>
</dbReference>
<dbReference type="GO" id="GO:0060019">
    <property type="term" value="P:radial glial cell differentiation"/>
    <property type="evidence" value="ECO:0007669"/>
    <property type="project" value="Ensembl"/>
</dbReference>
<dbReference type="GO" id="GO:0070445">
    <property type="term" value="P:regulation of oligodendrocyte progenitor proliferation"/>
    <property type="evidence" value="ECO:0007669"/>
    <property type="project" value="Ensembl"/>
</dbReference>
<dbReference type="GO" id="GO:1902897">
    <property type="term" value="P:regulation of postsynaptic density protein 95 clustering"/>
    <property type="evidence" value="ECO:0007669"/>
    <property type="project" value="Ensembl"/>
</dbReference>
<dbReference type="GO" id="GO:0051146">
    <property type="term" value="P:striated muscle cell differentiation"/>
    <property type="evidence" value="ECO:0007669"/>
    <property type="project" value="Ensembl"/>
</dbReference>
<dbReference type="GO" id="GO:0007416">
    <property type="term" value="P:synapse assembly"/>
    <property type="evidence" value="ECO:0000318"/>
    <property type="project" value="GO_Central"/>
</dbReference>
<dbReference type="GO" id="GO:0050808">
    <property type="term" value="P:synapse organization"/>
    <property type="evidence" value="ECO:0000315"/>
    <property type="project" value="UniProtKB"/>
</dbReference>
<dbReference type="GO" id="GO:0097091">
    <property type="term" value="P:synaptic vesicle clustering"/>
    <property type="evidence" value="ECO:0007669"/>
    <property type="project" value="Ensembl"/>
</dbReference>
<dbReference type="GO" id="GO:0061561">
    <property type="term" value="P:trigeminal ganglion formation"/>
    <property type="evidence" value="ECO:0000315"/>
    <property type="project" value="AgBase"/>
</dbReference>
<dbReference type="GO" id="GO:0061563">
    <property type="term" value="P:trigeminal ganglion structural organization"/>
    <property type="evidence" value="ECO:0000315"/>
    <property type="project" value="AgBase"/>
</dbReference>
<dbReference type="GO" id="GO:0003323">
    <property type="term" value="P:type B pancreatic cell development"/>
    <property type="evidence" value="ECO:0007669"/>
    <property type="project" value="Ensembl"/>
</dbReference>
<dbReference type="CDD" id="cd11304">
    <property type="entry name" value="Cadherin_repeat"/>
    <property type="match status" value="4"/>
</dbReference>
<dbReference type="FunFam" id="2.60.40.60:FF:000011">
    <property type="entry name" value="Cadherin 1"/>
    <property type="match status" value="1"/>
</dbReference>
<dbReference type="FunFam" id="2.60.40.60:FF:000019">
    <property type="entry name" value="Cadherin 2"/>
    <property type="match status" value="1"/>
</dbReference>
<dbReference type="FunFam" id="2.60.40.60:FF:000022">
    <property type="entry name" value="Cadherin 2"/>
    <property type="match status" value="1"/>
</dbReference>
<dbReference type="FunFam" id="2.60.40.60:FF:000027">
    <property type="entry name" value="Cadherin 2"/>
    <property type="match status" value="1"/>
</dbReference>
<dbReference type="FunFam" id="2.60.40.60:FF:000045">
    <property type="entry name" value="Cadherin 2"/>
    <property type="match status" value="1"/>
</dbReference>
<dbReference type="FunFam" id="4.10.900.10:FF:000001">
    <property type="entry name" value="Cadherin 2"/>
    <property type="match status" value="1"/>
</dbReference>
<dbReference type="Gene3D" id="2.60.40.60">
    <property type="entry name" value="Cadherins"/>
    <property type="match status" value="6"/>
</dbReference>
<dbReference type="Gene3D" id="4.10.900.10">
    <property type="entry name" value="TCF3-CBD (Catenin binding domain)"/>
    <property type="match status" value="1"/>
</dbReference>
<dbReference type="InterPro" id="IPR039808">
    <property type="entry name" value="Cadherin"/>
</dbReference>
<dbReference type="InterPro" id="IPR002126">
    <property type="entry name" value="Cadherin-like_dom"/>
</dbReference>
<dbReference type="InterPro" id="IPR015919">
    <property type="entry name" value="Cadherin-like_sf"/>
</dbReference>
<dbReference type="InterPro" id="IPR020894">
    <property type="entry name" value="Cadherin_CS"/>
</dbReference>
<dbReference type="InterPro" id="IPR014868">
    <property type="entry name" value="Cadherin_pro_dom"/>
</dbReference>
<dbReference type="InterPro" id="IPR000233">
    <property type="entry name" value="Cadherin_Y-type_LIR"/>
</dbReference>
<dbReference type="InterPro" id="IPR027397">
    <property type="entry name" value="Catenin-bd_sf"/>
</dbReference>
<dbReference type="PANTHER" id="PTHR24027:SF79">
    <property type="entry name" value="CADHERIN-2"/>
    <property type="match status" value="1"/>
</dbReference>
<dbReference type="PANTHER" id="PTHR24027">
    <property type="entry name" value="CADHERIN-23"/>
    <property type="match status" value="1"/>
</dbReference>
<dbReference type="Pfam" id="PF01049">
    <property type="entry name" value="CADH_Y-type_LIR"/>
    <property type="match status" value="1"/>
</dbReference>
<dbReference type="Pfam" id="PF00028">
    <property type="entry name" value="Cadherin"/>
    <property type="match status" value="5"/>
</dbReference>
<dbReference type="Pfam" id="PF08758">
    <property type="entry name" value="Cadherin_pro"/>
    <property type="match status" value="1"/>
</dbReference>
<dbReference type="PRINTS" id="PR00205">
    <property type="entry name" value="CADHERIN"/>
</dbReference>
<dbReference type="PRINTS" id="PR01820">
    <property type="entry name" value="DESMOCOLLIN"/>
</dbReference>
<dbReference type="SMART" id="SM00112">
    <property type="entry name" value="CA"/>
    <property type="match status" value="5"/>
</dbReference>
<dbReference type="SMART" id="SM01055">
    <property type="entry name" value="Cadherin_pro"/>
    <property type="match status" value="1"/>
</dbReference>
<dbReference type="SUPFAM" id="SSF49313">
    <property type="entry name" value="Cadherin-like"/>
    <property type="match status" value="6"/>
</dbReference>
<dbReference type="PROSITE" id="PS00232">
    <property type="entry name" value="CADHERIN_1"/>
    <property type="match status" value="3"/>
</dbReference>
<dbReference type="PROSITE" id="PS50268">
    <property type="entry name" value="CADHERIN_2"/>
    <property type="match status" value="5"/>
</dbReference>
<evidence type="ECO:0000250" key="1">
    <source>
        <dbReference type="UniProtKB" id="P15116"/>
    </source>
</evidence>
<evidence type="ECO:0000250" key="2">
    <source>
        <dbReference type="UniProtKB" id="Q90275"/>
    </source>
</evidence>
<evidence type="ECO:0000255" key="3"/>
<evidence type="ECO:0000255" key="4">
    <source>
        <dbReference type="PROSITE-ProRule" id="PRU00043"/>
    </source>
</evidence>
<evidence type="ECO:0000256" key="5">
    <source>
        <dbReference type="SAM" id="MobiDB-lite"/>
    </source>
</evidence>
<evidence type="ECO:0000269" key="6">
    <source>
    </source>
</evidence>
<evidence type="ECO:0000269" key="7">
    <source>
    </source>
</evidence>
<evidence type="ECO:0000269" key="8">
    <source>
    </source>
</evidence>
<evidence type="ECO:0000269" key="9">
    <source>
    </source>
</evidence>
<evidence type="ECO:0000303" key="10">
    <source>
    </source>
</evidence>
<evidence type="ECO:0000305" key="11"/>
<comment type="function">
    <text evidence="2 8 9">Calcium-dependent cell adhesion protein; preferentially mediates homotypic cell-cell adhesion (PubMed:2831236). Cadherins may thus contribute to the sorting of heterogeneous cell types, and thereby play an important role during embryonic development (By similarity). Required for proper neurite branching, and pre- and postsynaptic organization (PubMed:29760652).</text>
</comment>
<comment type="subunit">
    <text evidence="1 6">Homodimer (via extracellular region). Can also form heterodimers with other cadherins (via extracellular region). Dimerization occurs in trans, i.e. with a cadherin chain from another cell (By similarity). Interacts with CTNNA2 (PubMed:1638632).</text>
</comment>
<comment type="interaction">
    <interactant intactId="EBI-985728">
        <id>P10288</id>
    </interactant>
    <interactant intactId="EBI-972394">
        <id>O42486</id>
        <label>Bcat</label>
    </interactant>
    <organismsDiffer>false</organismsDiffer>
    <experiments>5</experiments>
</comment>
<comment type="interaction">
    <interactant intactId="EBI-985728">
        <id>P10288</id>
    </interactant>
    <interactant intactId="EBI-6938259">
        <id>O13016</id>
        <label>PTPN1</label>
    </interactant>
    <organismsDiffer>false</organismsDiffer>
    <experiments>10</experiments>
</comment>
<comment type="subcellular location">
    <subcellularLocation>
        <location evidence="6 8">Cell membrane</location>
        <topology evidence="3">Single-pass type I membrane protein</topology>
    </subcellularLocation>
    <subcellularLocation>
        <location evidence="1">Cell membrane</location>
        <location evidence="1">Sarcolemma</location>
    </subcellularLocation>
    <subcellularLocation>
        <location evidence="1">Cell junction</location>
    </subcellularLocation>
    <subcellularLocation>
        <location evidence="1">Cell surface</location>
    </subcellularLocation>
    <subcellularLocation>
        <location evidence="1">Cell junction</location>
        <location evidence="1">Desmosome</location>
    </subcellularLocation>
    <subcellularLocation>
        <location evidence="1">Cell junction</location>
        <location evidence="1">Adherens junction</location>
    </subcellularLocation>
</comment>
<comment type="tissue specificity">
    <text evidence="7">Expressed at intercalated disks in the heart (at protein level).</text>
</comment>
<comment type="developmental stage">
    <text evidence="6 8">Expressed in the heart at birth (at protein level) (PubMed:2831236). Detected in the brain and heart at 10 days of age (at protein level) (PubMed:1638632, PubMed:2831236). Expressed in the brain and heart in 10 day old embryos (PubMed:2831236).</text>
</comment>
<comment type="domain">
    <text evidence="1">Three calcium ions are usually bound at the interface of each cadherin domain and rigidify the connections, imparting a strong curvature to the full-length ectodomain. Calcium-binding sites are occupied sequentially in the order of site 3, then site 2 and site 1.</text>
</comment>
<reference key="1">
    <citation type="journal article" date="1988" name="J. Cell Biol.">
        <title>Cloning and expression of cDNA encoding a neural calcium-dependent cell adhesion molecule: its identity in the cadherin gene family.</title>
        <authorList>
            <person name="Hatta K."/>
            <person name="Nose A."/>
            <person name="Nagafuchi A."/>
            <person name="Takeichi M."/>
        </authorList>
    </citation>
    <scope>NUCLEOTIDE SEQUENCE [MRNA]</scope>
    <scope>FUNCTION</scope>
    <scope>SUBCELLULAR LOCATION</scope>
    <scope>DEVELOPMENTAL STAGE</scope>
</reference>
<reference key="2">
    <citation type="journal article" date="1997" name="Gene">
        <title>Isolation and characterization of the promoter region of the chicken N-cadherin gene.</title>
        <authorList>
            <person name="Li B."/>
            <person name="Paradies N.E."/>
            <person name="Brackenbury R.W."/>
        </authorList>
    </citation>
    <scope>NUCLEOTIDE SEQUENCE [GENOMIC DNA] OF 1-25</scope>
    <source>
        <strain>Cornish white rock Cockerel</strain>
    </source>
</reference>
<reference key="3">
    <citation type="journal article" date="1992" name="Cell">
        <title>Identification of a neural alpha-catenin as a key regulator of cadherin function and multicellular organization.</title>
        <authorList>
            <person name="Hirano S."/>
            <person name="Kimoto N."/>
            <person name="Shimoyama Y."/>
            <person name="Hirohashi S."/>
            <person name="Takeichi M."/>
        </authorList>
    </citation>
    <scope>INTERACTION WITH CTNNA2</scope>
    <scope>SUBCELLULAR LOCATION</scope>
    <scope>DEVELOPMENTAL STAGE</scope>
    <source>
        <tissue>Embryonic brain</tissue>
    </source>
</reference>
<reference key="4">
    <citation type="journal article" date="2008" name="PLoS ONE">
        <title>Emergence of Xin demarcates a key innovation in heart evolution.</title>
        <authorList>
            <person name="Grosskurth S.E."/>
            <person name="Bhattacharya D."/>
            <person name="Wang Q."/>
            <person name="Lin J.J."/>
        </authorList>
    </citation>
    <scope>TISSUE SPECIFICITY</scope>
</reference>
<reference key="5">
    <citation type="journal article" date="2018" name="Front. Mol. Neurosci.">
        <title>Cadherins Interact With Synaptic Organizers to Promote Synaptic Differentiation.</title>
        <authorList>
            <person name="Yamagata M."/>
            <person name="Duan X."/>
            <person name="Sanes J.R."/>
        </authorList>
    </citation>
    <scope>FUNCTION</scope>
</reference>
<feature type="signal peptide" evidence="3">
    <location>
        <begin position="1"/>
        <end position="28"/>
    </location>
</feature>
<feature type="propeptide" id="PRO_0000003737" evidence="3">
    <location>
        <begin position="29"/>
        <end position="164"/>
    </location>
</feature>
<feature type="chain" id="PRO_0000003738" description="Cadherin-2">
    <location>
        <begin position="165"/>
        <end position="912"/>
    </location>
</feature>
<feature type="topological domain" description="Extracellular" evidence="3">
    <location>
        <begin position="165"/>
        <end position="729"/>
    </location>
</feature>
<feature type="transmembrane region" description="Helical" evidence="3">
    <location>
        <begin position="730"/>
        <end position="752"/>
    </location>
</feature>
<feature type="topological domain" description="Cytoplasmic" evidence="3">
    <location>
        <begin position="753"/>
        <end position="912"/>
    </location>
</feature>
<feature type="domain" description="Cadherin 1" evidence="4">
    <location>
        <begin position="165"/>
        <end position="272"/>
    </location>
</feature>
<feature type="domain" description="Cadherin 2" evidence="4">
    <location>
        <begin position="273"/>
        <end position="387"/>
    </location>
</feature>
<feature type="domain" description="Cadherin 3" evidence="4">
    <location>
        <begin position="388"/>
        <end position="502"/>
    </location>
</feature>
<feature type="domain" description="Cadherin 4" evidence="4">
    <location>
        <begin position="503"/>
        <end position="609"/>
    </location>
</feature>
<feature type="domain" description="Cadherin 5" evidence="4">
    <location>
        <begin position="610"/>
        <end position="720"/>
    </location>
</feature>
<feature type="region of interest" description="Disordered" evidence="5">
    <location>
        <begin position="869"/>
        <end position="890"/>
    </location>
</feature>
<feature type="compositionally biased region" description="Low complexity" evidence="5">
    <location>
        <begin position="869"/>
        <end position="886"/>
    </location>
</feature>
<feature type="binding site" evidence="1">
    <location>
        <position position="175"/>
    </location>
    <ligand>
        <name>Ca(2+)</name>
        <dbReference type="ChEBI" id="CHEBI:29108"/>
        <label>1</label>
    </ligand>
</feature>
<feature type="binding site" evidence="1">
    <location>
        <position position="175"/>
    </location>
    <ligand>
        <name>Ca(2+)</name>
        <dbReference type="ChEBI" id="CHEBI:29108"/>
        <label>2</label>
    </ligand>
</feature>
<feature type="binding site" evidence="1">
    <location>
        <position position="231"/>
    </location>
    <ligand>
        <name>Ca(2+)</name>
        <dbReference type="ChEBI" id="CHEBI:29108"/>
        <label>1</label>
    </ligand>
</feature>
<feature type="binding site" evidence="1">
    <location>
        <position position="233"/>
    </location>
    <ligand>
        <name>Ca(2+)</name>
        <dbReference type="ChEBI" id="CHEBI:29108"/>
        <label>1</label>
    </ligand>
</feature>
<feature type="binding site" evidence="1">
    <location>
        <position position="233"/>
    </location>
    <ligand>
        <name>Ca(2+)</name>
        <dbReference type="ChEBI" id="CHEBI:29108"/>
        <label>2</label>
    </ligand>
</feature>
<feature type="binding site" evidence="1">
    <location>
        <position position="264"/>
    </location>
    <ligand>
        <name>Ca(2+)</name>
        <dbReference type="ChEBI" id="CHEBI:29108"/>
        <label>2</label>
    </ligand>
</feature>
<feature type="binding site" evidence="1">
    <location>
        <position position="265"/>
    </location>
    <ligand>
        <name>Ca(2+)</name>
        <dbReference type="ChEBI" id="CHEBI:29108"/>
        <label>2</label>
    </ligand>
</feature>
<feature type="binding site" evidence="1">
    <location>
        <position position="266"/>
    </location>
    <ligand>
        <name>Ca(2+)</name>
        <dbReference type="ChEBI" id="CHEBI:29108"/>
        <label>3</label>
    </ligand>
</feature>
<feature type="binding site" evidence="1">
    <location>
        <position position="267"/>
    </location>
    <ligand>
        <name>Ca(2+)</name>
        <dbReference type="ChEBI" id="CHEBI:29108"/>
        <label>1</label>
    </ligand>
</feature>
<feature type="binding site" evidence="1">
    <location>
        <position position="267"/>
    </location>
    <ligand>
        <name>Ca(2+)</name>
        <dbReference type="ChEBI" id="CHEBI:29108"/>
        <label>2</label>
    </ligand>
</feature>
<feature type="binding site" evidence="1">
    <location>
        <position position="268"/>
    </location>
    <ligand>
        <name>Ca(2+)</name>
        <dbReference type="ChEBI" id="CHEBI:29108"/>
        <label>3</label>
    </ligand>
</feature>
<feature type="binding site" evidence="1">
    <location>
        <position position="298"/>
    </location>
    <ligand>
        <name>Ca(2+)</name>
        <dbReference type="ChEBI" id="CHEBI:29108"/>
        <label>3</label>
    </ligand>
</feature>
<feature type="binding site" evidence="1">
    <location>
        <position position="300"/>
    </location>
    <ligand>
        <name>Ca(2+)</name>
        <dbReference type="ChEBI" id="CHEBI:29108"/>
        <label>2</label>
    </ligand>
</feature>
<feature type="binding site" evidence="1">
    <location>
        <position position="306"/>
    </location>
    <ligand>
        <name>Ca(2+)</name>
        <dbReference type="ChEBI" id="CHEBI:29108"/>
        <label>3</label>
    </ligand>
</feature>
<feature type="binding site" evidence="1">
    <location>
        <position position="358"/>
    </location>
    <ligand>
        <name>Ca(2+)</name>
        <dbReference type="ChEBI" id="CHEBI:29108"/>
        <label>3</label>
    </ligand>
</feature>
<feature type="glycosylation site" description="N-linked (GlcNAc...) asparagine" evidence="3">
    <location>
        <position position="278"/>
    </location>
</feature>
<feature type="glycosylation site" description="N-linked (GlcNAc...) asparagine" evidence="3">
    <location>
        <position position="330"/>
    </location>
</feature>
<feature type="glycosylation site" description="N-linked (GlcNAc...) asparagine" evidence="3">
    <location>
        <position position="407"/>
    </location>
</feature>
<feature type="glycosylation site" description="N-linked (GlcNAc...) asparagine" evidence="3">
    <location>
        <position position="578"/>
    </location>
</feature>
<feature type="glycosylation site" description="N-linked (GlcNAc...) asparagine" evidence="3">
    <location>
        <position position="628"/>
    </location>
</feature>
<feature type="glycosylation site" description="N-linked (GlcNAc...) asparagine" evidence="3">
    <location>
        <position position="657"/>
    </location>
</feature>
<feature type="sequence conflict" description="In Ref. 2; AAB62980." evidence="11" ref="2">
    <original>A</original>
    <variation>G</variation>
    <location>
        <position position="21"/>
    </location>
</feature>
<organism>
    <name type="scientific">Gallus gallus</name>
    <name type="common">Chicken</name>
    <dbReference type="NCBI Taxonomy" id="9031"/>
    <lineage>
        <taxon>Eukaryota</taxon>
        <taxon>Metazoa</taxon>
        <taxon>Chordata</taxon>
        <taxon>Craniata</taxon>
        <taxon>Vertebrata</taxon>
        <taxon>Euteleostomi</taxon>
        <taxon>Archelosauria</taxon>
        <taxon>Archosauria</taxon>
        <taxon>Dinosauria</taxon>
        <taxon>Saurischia</taxon>
        <taxon>Theropoda</taxon>
        <taxon>Coelurosauria</taxon>
        <taxon>Aves</taxon>
        <taxon>Neognathae</taxon>
        <taxon>Galloanserae</taxon>
        <taxon>Galliformes</taxon>
        <taxon>Phasianidae</taxon>
        <taxon>Phasianinae</taxon>
        <taxon>Gallus</taxon>
    </lineage>
</organism>
<keyword id="KW-0106">Calcium</keyword>
<keyword id="KW-0130">Cell adhesion</keyword>
<keyword id="KW-0965">Cell junction</keyword>
<keyword id="KW-1003">Cell membrane</keyword>
<keyword id="KW-0165">Cleavage on pair of basic residues</keyword>
<keyword id="KW-0325">Glycoprotein</keyword>
<keyword id="KW-0472">Membrane</keyword>
<keyword id="KW-0479">Metal-binding</keyword>
<keyword id="KW-1185">Reference proteome</keyword>
<keyword id="KW-0677">Repeat</keyword>
<keyword id="KW-0732">Signal</keyword>
<keyword id="KW-0812">Transmembrane</keyword>
<keyword id="KW-1133">Transmembrane helix</keyword>
<proteinExistence type="evidence at protein level"/>